<accession>Q5R9W9</accession>
<keyword id="KW-0238">DNA-binding</keyword>
<keyword id="KW-1017">Isopeptide bond</keyword>
<keyword id="KW-0479">Metal-binding</keyword>
<keyword id="KW-0539">Nucleus</keyword>
<keyword id="KW-1185">Reference proteome</keyword>
<keyword id="KW-0677">Repeat</keyword>
<keyword id="KW-0678">Repressor</keyword>
<keyword id="KW-0804">Transcription</keyword>
<keyword id="KW-0805">Transcription regulation</keyword>
<keyword id="KW-0832">Ubl conjugation</keyword>
<keyword id="KW-0862">Zinc</keyword>
<keyword id="KW-0863">Zinc-finger</keyword>
<proteinExistence type="evidence at transcript level"/>
<feature type="chain" id="PRO_0000299473" description="Zinc finger protein Pegasus">
    <location>
        <begin position="1"/>
        <end position="420"/>
    </location>
</feature>
<feature type="zinc finger region" description="C2H2-type 1" evidence="3">
    <location>
        <begin position="82"/>
        <end position="104"/>
    </location>
</feature>
<feature type="zinc finger region" description="C2H2-type 2" evidence="3">
    <location>
        <begin position="110"/>
        <end position="132"/>
    </location>
</feature>
<feature type="zinc finger region" description="C2H2-type 3" evidence="3">
    <location>
        <begin position="138"/>
        <end position="161"/>
    </location>
</feature>
<feature type="zinc finger region" description="C2H2-type 4; degenerate" evidence="3">
    <location>
        <begin position="364"/>
        <end position="387"/>
    </location>
</feature>
<feature type="zinc finger region" description="C2H2-type 5" evidence="3">
    <location>
        <begin position="393"/>
        <end position="417"/>
    </location>
</feature>
<feature type="region of interest" description="Disordered" evidence="4">
    <location>
        <begin position="223"/>
        <end position="247"/>
    </location>
</feature>
<feature type="region of interest" description="Disordered" evidence="4">
    <location>
        <begin position="262"/>
        <end position="356"/>
    </location>
</feature>
<feature type="compositionally biased region" description="Polar residues" evidence="4">
    <location>
        <begin position="223"/>
        <end position="236"/>
    </location>
</feature>
<feature type="compositionally biased region" description="Polar residues" evidence="4">
    <location>
        <begin position="262"/>
        <end position="273"/>
    </location>
</feature>
<feature type="compositionally biased region" description="Low complexity" evidence="4">
    <location>
        <begin position="290"/>
        <end position="311"/>
    </location>
</feature>
<feature type="compositionally biased region" description="Polar residues" evidence="4">
    <location>
        <begin position="332"/>
        <end position="349"/>
    </location>
</feature>
<feature type="cross-link" description="Glycyl lysine isopeptide (Lys-Gly) (interchain with G-Cter in SUMO2)" evidence="2">
    <location>
        <position position="5"/>
    </location>
</feature>
<feature type="cross-link" description="Glycyl lysine isopeptide (Lys-Gly) (interchain with G-Cter in SUMO2)" evidence="2">
    <location>
        <position position="185"/>
    </location>
</feature>
<name>IKZF5_PONAB</name>
<reference key="1">
    <citation type="submission" date="2004-11" db="EMBL/GenBank/DDBJ databases">
        <authorList>
            <consortium name="The German cDNA consortium"/>
        </authorList>
    </citation>
    <scope>NUCLEOTIDE SEQUENCE [LARGE SCALE MRNA]</scope>
    <source>
        <tissue>Heart</tissue>
    </source>
</reference>
<evidence type="ECO:0000250" key="1"/>
<evidence type="ECO:0000250" key="2">
    <source>
        <dbReference type="UniProtKB" id="Q9H5V7"/>
    </source>
</evidence>
<evidence type="ECO:0000255" key="3">
    <source>
        <dbReference type="PROSITE-ProRule" id="PRU00042"/>
    </source>
</evidence>
<evidence type="ECO:0000256" key="4">
    <source>
        <dbReference type="SAM" id="MobiDB-lite"/>
    </source>
</evidence>
<evidence type="ECO:0000305" key="5"/>
<sequence>MGEKKPEPLDFVKDFQEYLTQQTHHVNMISGSVSGDKEAEALQGAGTDGDQNGLDHPSVEVSLDENSGMLVDGFERTFDGKLKCRYCNYASKGTARLIEHIRIHTGEKPHRCHLCPFASAYERHLEAHMRSHTGEKPYKCELCSFRCSDRSNLSHHRRRKHKMVPIKGTRSSLSSKKMWGVLQKKTSNLGYSRRALINLSPPSMVVQKPDYLNDFTHEIPNIQTDSYESMAKTTPTGGLPRDPQELMVDNPLNQLSTLAGQLSSLPPENQNPASPDVVPCPDEKPFMIQQPSTQAVVSAVSASIPQSSSPTSPEPRPSHSQRNYSPVAGPSSEPSAHTSTPSIGNSQPSTPAPALPVQDPQLLHHCQHCDMYFFADNILYTIHMGCHGYENPFQCNICGCKCKNKYDFACHFARGQHNQH</sequence>
<dbReference type="EMBL" id="CR859262">
    <property type="protein sequence ID" value="CAH91441.1"/>
    <property type="status" value="ALT_INIT"/>
    <property type="molecule type" value="mRNA"/>
</dbReference>
<dbReference type="RefSeq" id="NP_001125847.1">
    <property type="nucleotide sequence ID" value="NM_001132375.1"/>
</dbReference>
<dbReference type="SMR" id="Q5R9W9"/>
<dbReference type="STRING" id="9601.ENSPPYP00000003186"/>
<dbReference type="GeneID" id="100172776"/>
<dbReference type="KEGG" id="pon:100172776"/>
<dbReference type="CTD" id="64376"/>
<dbReference type="eggNOG" id="KOG1721">
    <property type="taxonomic scope" value="Eukaryota"/>
</dbReference>
<dbReference type="HOGENOM" id="CLU_734778_0_0_1"/>
<dbReference type="InParanoid" id="Q5R9W9"/>
<dbReference type="OrthoDB" id="5576026at2759"/>
<dbReference type="Proteomes" id="UP000001595">
    <property type="component" value="Unplaced"/>
</dbReference>
<dbReference type="GO" id="GO:0005634">
    <property type="term" value="C:nucleus"/>
    <property type="evidence" value="ECO:0000250"/>
    <property type="project" value="UniProtKB"/>
</dbReference>
<dbReference type="GO" id="GO:0003682">
    <property type="term" value="F:chromatin binding"/>
    <property type="evidence" value="ECO:0000250"/>
    <property type="project" value="UniProtKB"/>
</dbReference>
<dbReference type="GO" id="GO:0003700">
    <property type="term" value="F:DNA-binding transcription factor activity"/>
    <property type="evidence" value="ECO:0007669"/>
    <property type="project" value="TreeGrafter"/>
</dbReference>
<dbReference type="GO" id="GO:0000978">
    <property type="term" value="F:RNA polymerase II cis-regulatory region sequence-specific DNA binding"/>
    <property type="evidence" value="ECO:0007669"/>
    <property type="project" value="TreeGrafter"/>
</dbReference>
<dbReference type="GO" id="GO:0008270">
    <property type="term" value="F:zinc ion binding"/>
    <property type="evidence" value="ECO:0007669"/>
    <property type="project" value="UniProtKB-KW"/>
</dbReference>
<dbReference type="GO" id="GO:0006357">
    <property type="term" value="P:regulation of transcription by RNA polymerase II"/>
    <property type="evidence" value="ECO:0007669"/>
    <property type="project" value="TreeGrafter"/>
</dbReference>
<dbReference type="FunFam" id="3.30.160.60:FF:000402">
    <property type="entry name" value="IKAROS family zinc finger 5"/>
    <property type="match status" value="1"/>
</dbReference>
<dbReference type="FunFam" id="3.30.160.60:FF:000924">
    <property type="entry name" value="IKAROS family zinc finger 5"/>
    <property type="match status" value="1"/>
</dbReference>
<dbReference type="FunFam" id="3.30.160.60:FF:001097">
    <property type="entry name" value="IKAROS family zinc finger 5"/>
    <property type="match status" value="1"/>
</dbReference>
<dbReference type="Gene3D" id="3.30.160.60">
    <property type="entry name" value="Classic Zinc Finger"/>
    <property type="match status" value="3"/>
</dbReference>
<dbReference type="InterPro" id="IPR050589">
    <property type="entry name" value="Ikaros_C2H2-ZF"/>
</dbReference>
<dbReference type="InterPro" id="IPR036236">
    <property type="entry name" value="Znf_C2H2_sf"/>
</dbReference>
<dbReference type="InterPro" id="IPR013087">
    <property type="entry name" value="Znf_C2H2_type"/>
</dbReference>
<dbReference type="PANTHER" id="PTHR24404">
    <property type="entry name" value="ZINC FINGER PROTEIN"/>
    <property type="match status" value="1"/>
</dbReference>
<dbReference type="PANTHER" id="PTHR24404:SF55">
    <property type="entry name" value="ZINC FINGER PROTEIN PEGASUS"/>
    <property type="match status" value="1"/>
</dbReference>
<dbReference type="SMART" id="SM00355">
    <property type="entry name" value="ZnF_C2H2"/>
    <property type="match status" value="5"/>
</dbReference>
<dbReference type="SUPFAM" id="SSF57667">
    <property type="entry name" value="beta-beta-alpha zinc fingers"/>
    <property type="match status" value="2"/>
</dbReference>
<dbReference type="PROSITE" id="PS00028">
    <property type="entry name" value="ZINC_FINGER_C2H2_1"/>
    <property type="match status" value="2"/>
</dbReference>
<dbReference type="PROSITE" id="PS50157">
    <property type="entry name" value="ZINC_FINGER_C2H2_2"/>
    <property type="match status" value="3"/>
</dbReference>
<comment type="function">
    <text evidence="2">Transcriptional repressor that binds the core 5'GNNTGTNG-3' DNA consensus sequence (By similarity). Involved in megakaryocyte differentiation (By similarity).</text>
</comment>
<comment type="subunit">
    <text evidence="1">Self-associates. Interacts with other family members; IKZF1, IKZF2, IKZF3 and IKZF4 (By similarity).</text>
</comment>
<comment type="subcellular location">
    <subcellularLocation>
        <location evidence="2">Nucleus</location>
    </subcellularLocation>
</comment>
<comment type="domain">
    <text evidence="1">The N-terminal zinc fingers are involved in sequence-specific DNA binding and heterotypic associations with other family members.</text>
</comment>
<comment type="domain">
    <text evidence="1">C-terminal zinc fingers mediate homodimerization.</text>
</comment>
<comment type="miscellaneous">
    <text>'Pegasus' was the winged horse in Greek mythology.</text>
</comment>
<comment type="similarity">
    <text evidence="5">Belongs to the Ikaros C2H2-type zinc-finger protein family.</text>
</comment>
<comment type="sequence caution" evidence="5">
    <conflict type="erroneous initiation">
        <sequence resource="EMBL-CDS" id="CAH91441"/>
    </conflict>
    <text>Extended N-terminus.</text>
</comment>
<protein>
    <recommendedName>
        <fullName>Zinc finger protein Pegasus</fullName>
    </recommendedName>
    <alternativeName>
        <fullName>Ikaros family zinc finger protein 5</fullName>
    </alternativeName>
</protein>
<gene>
    <name type="primary">IKZF5</name>
</gene>
<organism>
    <name type="scientific">Pongo abelii</name>
    <name type="common">Sumatran orangutan</name>
    <name type="synonym">Pongo pygmaeus abelii</name>
    <dbReference type="NCBI Taxonomy" id="9601"/>
    <lineage>
        <taxon>Eukaryota</taxon>
        <taxon>Metazoa</taxon>
        <taxon>Chordata</taxon>
        <taxon>Craniata</taxon>
        <taxon>Vertebrata</taxon>
        <taxon>Euteleostomi</taxon>
        <taxon>Mammalia</taxon>
        <taxon>Eutheria</taxon>
        <taxon>Euarchontoglires</taxon>
        <taxon>Primates</taxon>
        <taxon>Haplorrhini</taxon>
        <taxon>Catarrhini</taxon>
        <taxon>Hominidae</taxon>
        <taxon>Pongo</taxon>
    </lineage>
</organism>